<keyword id="KW-0067">ATP-binding</keyword>
<keyword id="KW-0963">Cytoplasm</keyword>
<keyword id="KW-0436">Ligase</keyword>
<keyword id="KW-0547">Nucleotide-binding</keyword>
<keyword id="KW-0566">Pantothenate biosynthesis</keyword>
<keyword id="KW-1185">Reference proteome</keyword>
<name>PANC_LEGPH</name>
<reference key="1">
    <citation type="journal article" date="2004" name="Science">
        <title>The genomic sequence of the accidental pathogen Legionella pneumophila.</title>
        <authorList>
            <person name="Chien M."/>
            <person name="Morozova I."/>
            <person name="Shi S."/>
            <person name="Sheng H."/>
            <person name="Chen J."/>
            <person name="Gomez S.M."/>
            <person name="Asamani G."/>
            <person name="Hill K."/>
            <person name="Nuara J."/>
            <person name="Feder M."/>
            <person name="Rineer J."/>
            <person name="Greenberg J.J."/>
            <person name="Steshenko V."/>
            <person name="Park S.H."/>
            <person name="Zhao B."/>
            <person name="Teplitskaya E."/>
            <person name="Edwards J.R."/>
            <person name="Pampou S."/>
            <person name="Georghiou A."/>
            <person name="Chou I.-C."/>
            <person name="Iannuccilli W."/>
            <person name="Ulz M.E."/>
            <person name="Kim D.H."/>
            <person name="Geringer-Sameth A."/>
            <person name="Goldsberry C."/>
            <person name="Morozov P."/>
            <person name="Fischer S.G."/>
            <person name="Segal G."/>
            <person name="Qu X."/>
            <person name="Rzhetsky A."/>
            <person name="Zhang P."/>
            <person name="Cayanis E."/>
            <person name="De Jong P.J."/>
            <person name="Ju J."/>
            <person name="Kalachikov S."/>
            <person name="Shuman H.A."/>
            <person name="Russo J.J."/>
        </authorList>
    </citation>
    <scope>NUCLEOTIDE SEQUENCE [LARGE SCALE GENOMIC DNA]</scope>
    <source>
        <strain>Philadelphia 1 / ATCC 33152 / DSM 7513</strain>
    </source>
</reference>
<evidence type="ECO:0000255" key="1">
    <source>
        <dbReference type="HAMAP-Rule" id="MF_00158"/>
    </source>
</evidence>
<organism>
    <name type="scientific">Legionella pneumophila subsp. pneumophila (strain Philadelphia 1 / ATCC 33152 / DSM 7513)</name>
    <dbReference type="NCBI Taxonomy" id="272624"/>
    <lineage>
        <taxon>Bacteria</taxon>
        <taxon>Pseudomonadati</taxon>
        <taxon>Pseudomonadota</taxon>
        <taxon>Gammaproteobacteria</taxon>
        <taxon>Legionellales</taxon>
        <taxon>Legionellaceae</taxon>
        <taxon>Legionella</taxon>
    </lineage>
</organism>
<protein>
    <recommendedName>
        <fullName evidence="1">Pantothenate synthetase</fullName>
        <shortName evidence="1">PS</shortName>
        <ecNumber evidence="1">6.3.2.1</ecNumber>
    </recommendedName>
    <alternativeName>
        <fullName evidence="1">Pantoate--beta-alanine ligase</fullName>
    </alternativeName>
    <alternativeName>
        <fullName evidence="1">Pantoate-activating enzyme</fullName>
    </alternativeName>
</protein>
<dbReference type="EC" id="6.3.2.1" evidence="1"/>
<dbReference type="EMBL" id="AE017354">
    <property type="protein sequence ID" value="AAU28720.1"/>
    <property type="molecule type" value="Genomic_DNA"/>
</dbReference>
<dbReference type="RefSeq" id="WP_010948362.1">
    <property type="nucleotide sequence ID" value="NC_002942.5"/>
</dbReference>
<dbReference type="RefSeq" id="YP_096667.1">
    <property type="nucleotide sequence ID" value="NC_002942.5"/>
</dbReference>
<dbReference type="SMR" id="Q5ZS57"/>
<dbReference type="STRING" id="272624.lpg2662"/>
<dbReference type="PaxDb" id="272624-lpg2662"/>
<dbReference type="GeneID" id="57036662"/>
<dbReference type="KEGG" id="lpn:lpg2662"/>
<dbReference type="PATRIC" id="fig|272624.6.peg.2842"/>
<dbReference type="eggNOG" id="COG0414">
    <property type="taxonomic scope" value="Bacteria"/>
</dbReference>
<dbReference type="HOGENOM" id="CLU_047148_0_0_6"/>
<dbReference type="OrthoDB" id="9773087at2"/>
<dbReference type="UniPathway" id="UPA00028">
    <property type="reaction ID" value="UER00005"/>
</dbReference>
<dbReference type="Proteomes" id="UP000000609">
    <property type="component" value="Chromosome"/>
</dbReference>
<dbReference type="GO" id="GO:0005829">
    <property type="term" value="C:cytosol"/>
    <property type="evidence" value="ECO:0007669"/>
    <property type="project" value="TreeGrafter"/>
</dbReference>
<dbReference type="GO" id="GO:0005524">
    <property type="term" value="F:ATP binding"/>
    <property type="evidence" value="ECO:0007669"/>
    <property type="project" value="UniProtKB-KW"/>
</dbReference>
<dbReference type="GO" id="GO:0004592">
    <property type="term" value="F:pantoate-beta-alanine ligase activity"/>
    <property type="evidence" value="ECO:0007669"/>
    <property type="project" value="UniProtKB-UniRule"/>
</dbReference>
<dbReference type="GO" id="GO:0015940">
    <property type="term" value="P:pantothenate biosynthetic process"/>
    <property type="evidence" value="ECO:0007669"/>
    <property type="project" value="UniProtKB-UniRule"/>
</dbReference>
<dbReference type="Gene3D" id="3.40.50.620">
    <property type="entry name" value="HUPs"/>
    <property type="match status" value="1"/>
</dbReference>
<dbReference type="Gene3D" id="3.30.1300.10">
    <property type="entry name" value="Pantoate-beta-alanine ligase, C-terminal domain"/>
    <property type="match status" value="1"/>
</dbReference>
<dbReference type="HAMAP" id="MF_00158">
    <property type="entry name" value="PanC"/>
    <property type="match status" value="1"/>
</dbReference>
<dbReference type="InterPro" id="IPR003721">
    <property type="entry name" value="Pantoate_ligase"/>
</dbReference>
<dbReference type="InterPro" id="IPR042176">
    <property type="entry name" value="Pantoate_ligase_C"/>
</dbReference>
<dbReference type="InterPro" id="IPR014729">
    <property type="entry name" value="Rossmann-like_a/b/a_fold"/>
</dbReference>
<dbReference type="NCBIfam" id="TIGR00018">
    <property type="entry name" value="panC"/>
    <property type="match status" value="1"/>
</dbReference>
<dbReference type="PANTHER" id="PTHR21299">
    <property type="entry name" value="CYTIDYLATE KINASE/PANTOATE-BETA-ALANINE LIGASE"/>
    <property type="match status" value="1"/>
</dbReference>
<dbReference type="PANTHER" id="PTHR21299:SF1">
    <property type="entry name" value="PANTOATE--BETA-ALANINE LIGASE"/>
    <property type="match status" value="1"/>
</dbReference>
<dbReference type="Pfam" id="PF02569">
    <property type="entry name" value="Pantoate_ligase"/>
    <property type="match status" value="1"/>
</dbReference>
<dbReference type="SUPFAM" id="SSF52374">
    <property type="entry name" value="Nucleotidylyl transferase"/>
    <property type="match status" value="1"/>
</dbReference>
<proteinExistence type="inferred from homology"/>
<comment type="function">
    <text evidence="1">Catalyzes the condensation of pantoate with beta-alanine in an ATP-dependent reaction via a pantoyl-adenylate intermediate.</text>
</comment>
<comment type="catalytic activity">
    <reaction evidence="1">
        <text>(R)-pantoate + beta-alanine + ATP = (R)-pantothenate + AMP + diphosphate + H(+)</text>
        <dbReference type="Rhea" id="RHEA:10912"/>
        <dbReference type="ChEBI" id="CHEBI:15378"/>
        <dbReference type="ChEBI" id="CHEBI:15980"/>
        <dbReference type="ChEBI" id="CHEBI:29032"/>
        <dbReference type="ChEBI" id="CHEBI:30616"/>
        <dbReference type="ChEBI" id="CHEBI:33019"/>
        <dbReference type="ChEBI" id="CHEBI:57966"/>
        <dbReference type="ChEBI" id="CHEBI:456215"/>
        <dbReference type="EC" id="6.3.2.1"/>
    </reaction>
</comment>
<comment type="pathway">
    <text evidence="1">Cofactor biosynthesis; (R)-pantothenate biosynthesis; (R)-pantothenate from (R)-pantoate and beta-alanine: step 1/1.</text>
</comment>
<comment type="subunit">
    <text evidence="1">Homodimer.</text>
</comment>
<comment type="subcellular location">
    <subcellularLocation>
        <location evidence="1">Cytoplasm</location>
    </subcellularLocation>
</comment>
<comment type="miscellaneous">
    <text evidence="1">The reaction proceeds by a bi uni uni bi ping pong mechanism.</text>
</comment>
<comment type="similarity">
    <text evidence="1">Belongs to the pantothenate synthetase family.</text>
</comment>
<accession>Q5ZS57</accession>
<feature type="chain" id="PRO_0000305470" description="Pantothenate synthetase">
    <location>
        <begin position="1"/>
        <end position="252"/>
    </location>
</feature>
<feature type="active site" description="Proton donor" evidence="1">
    <location>
        <position position="36"/>
    </location>
</feature>
<feature type="binding site" evidence="1">
    <location>
        <begin position="29"/>
        <end position="36"/>
    </location>
    <ligand>
        <name>ATP</name>
        <dbReference type="ChEBI" id="CHEBI:30616"/>
    </ligand>
</feature>
<feature type="binding site" evidence="1">
    <location>
        <position position="60"/>
    </location>
    <ligand>
        <name>(R)-pantoate</name>
        <dbReference type="ChEBI" id="CHEBI:15980"/>
    </ligand>
</feature>
<feature type="binding site" evidence="1">
    <location>
        <position position="60"/>
    </location>
    <ligand>
        <name>beta-alanine</name>
        <dbReference type="ChEBI" id="CHEBI:57966"/>
    </ligand>
</feature>
<feature type="binding site" evidence="1">
    <location>
        <begin position="146"/>
        <end position="149"/>
    </location>
    <ligand>
        <name>ATP</name>
        <dbReference type="ChEBI" id="CHEBI:30616"/>
    </ligand>
</feature>
<feature type="binding site" evidence="1">
    <location>
        <position position="152"/>
    </location>
    <ligand>
        <name>(R)-pantoate</name>
        <dbReference type="ChEBI" id="CHEBI:15980"/>
    </ligand>
</feature>
<feature type="binding site" evidence="1">
    <location>
        <position position="175"/>
    </location>
    <ligand>
        <name>ATP</name>
        <dbReference type="ChEBI" id="CHEBI:30616"/>
    </ligand>
</feature>
<feature type="binding site" evidence="1">
    <location>
        <begin position="183"/>
        <end position="186"/>
    </location>
    <ligand>
        <name>ATP</name>
        <dbReference type="ChEBI" id="CHEBI:30616"/>
    </ligand>
</feature>
<gene>
    <name evidence="1" type="primary">panC</name>
    <name type="ordered locus">lpg2662</name>
</gene>
<sequence length="252" mass="28813">MQIFHNLNEWIHFRNTLSPDLSLGFAPTMGNLHAGHASLFLASSKENHYTVSSLFVNPTQFNNPDDYKHYPRTVDADLELMTQNGVDFCILPNENEIYTDGYAYQVQENRLGQLMEGKHRPGHFNGVLTIVMKLFNLVKPTRAYFGEKDYQQLLLIQGMVKALFMDIEIKSCPTVREKSGLACSSRNNRLTPSQREIADEFAKIFHQNKSSAMISKELEALGITVEYIEEFQGRRFAAVKIGDIRLIDNYLL</sequence>